<keyword id="KW-0963">Cytoplasm</keyword>
<keyword id="KW-0441">Lipid A biosynthesis</keyword>
<keyword id="KW-0444">Lipid biosynthesis</keyword>
<keyword id="KW-0443">Lipid metabolism</keyword>
<keyword id="KW-0456">Lyase</keyword>
<organism>
    <name type="scientific">Rickettsia peacockii (strain Rustic)</name>
    <dbReference type="NCBI Taxonomy" id="562019"/>
    <lineage>
        <taxon>Bacteria</taxon>
        <taxon>Pseudomonadati</taxon>
        <taxon>Pseudomonadota</taxon>
        <taxon>Alphaproteobacteria</taxon>
        <taxon>Rickettsiales</taxon>
        <taxon>Rickettsiaceae</taxon>
        <taxon>Rickettsieae</taxon>
        <taxon>Rickettsia</taxon>
        <taxon>spotted fever group</taxon>
    </lineage>
</organism>
<proteinExistence type="inferred from homology"/>
<reference key="1">
    <citation type="journal article" date="2009" name="PLoS ONE">
        <title>Genome sequence of the endosymbiont Rickettsia peacockii and comparison with virulent Rickettsia rickettsii: identification of virulence factors.</title>
        <authorList>
            <person name="Felsheim R.F."/>
            <person name="Kurtti T.J."/>
            <person name="Munderloh U.G."/>
        </authorList>
    </citation>
    <scope>NUCLEOTIDE SEQUENCE [LARGE SCALE GENOMIC DNA]</scope>
    <source>
        <strain>Rustic</strain>
    </source>
</reference>
<evidence type="ECO:0000255" key="1">
    <source>
        <dbReference type="HAMAP-Rule" id="MF_00406"/>
    </source>
</evidence>
<accession>C4K0C2</accession>
<feature type="chain" id="PRO_1000205948" description="3-hydroxyacyl-[acyl-carrier-protein] dehydratase FabZ">
    <location>
        <begin position="1"/>
        <end position="145"/>
    </location>
</feature>
<feature type="active site" evidence="1">
    <location>
        <position position="49"/>
    </location>
</feature>
<comment type="function">
    <text evidence="1">Involved in unsaturated fatty acids biosynthesis. Catalyzes the dehydration of short chain beta-hydroxyacyl-ACPs and long chain saturated and unsaturated beta-hydroxyacyl-ACPs.</text>
</comment>
<comment type="catalytic activity">
    <reaction evidence="1">
        <text>a (3R)-hydroxyacyl-[ACP] = a (2E)-enoyl-[ACP] + H2O</text>
        <dbReference type="Rhea" id="RHEA:13097"/>
        <dbReference type="Rhea" id="RHEA-COMP:9925"/>
        <dbReference type="Rhea" id="RHEA-COMP:9945"/>
        <dbReference type="ChEBI" id="CHEBI:15377"/>
        <dbReference type="ChEBI" id="CHEBI:78784"/>
        <dbReference type="ChEBI" id="CHEBI:78827"/>
        <dbReference type="EC" id="4.2.1.59"/>
    </reaction>
</comment>
<comment type="subcellular location">
    <subcellularLocation>
        <location evidence="1">Cytoplasm</location>
    </subcellularLocation>
</comment>
<comment type="similarity">
    <text evidence="1">Belongs to the thioester dehydratase family. FabZ subfamily.</text>
</comment>
<name>FABZ_RICPU</name>
<sequence>MIIDITEIMDWIPHRYPFLLVDRVLKIDPNKSITGIKNVTVNEPQFTGHFPARPVMPGVLMVEAMAQLAAILVAKSLGSTKNKEVFLMTIENAKFRRIVQPGDTMHIHAVIDQQRANVWKFSSTVTVEGEIAAESKFTAMIKDKT</sequence>
<dbReference type="EC" id="4.2.1.59" evidence="1"/>
<dbReference type="EMBL" id="CP001227">
    <property type="protein sequence ID" value="ACR47025.1"/>
    <property type="molecule type" value="Genomic_DNA"/>
</dbReference>
<dbReference type="RefSeq" id="WP_004997000.1">
    <property type="nucleotide sequence ID" value="NC_012730.1"/>
</dbReference>
<dbReference type="SMR" id="C4K0C2"/>
<dbReference type="GeneID" id="95361756"/>
<dbReference type="KEGG" id="rpk:RPR_00040"/>
<dbReference type="HOGENOM" id="CLU_078912_1_2_5"/>
<dbReference type="Proteomes" id="UP000005015">
    <property type="component" value="Chromosome"/>
</dbReference>
<dbReference type="GO" id="GO:0005737">
    <property type="term" value="C:cytoplasm"/>
    <property type="evidence" value="ECO:0007669"/>
    <property type="project" value="UniProtKB-SubCell"/>
</dbReference>
<dbReference type="GO" id="GO:0016020">
    <property type="term" value="C:membrane"/>
    <property type="evidence" value="ECO:0007669"/>
    <property type="project" value="GOC"/>
</dbReference>
<dbReference type="GO" id="GO:0019171">
    <property type="term" value="F:(3R)-hydroxyacyl-[acyl-carrier-protein] dehydratase activity"/>
    <property type="evidence" value="ECO:0007669"/>
    <property type="project" value="UniProtKB-EC"/>
</dbReference>
<dbReference type="GO" id="GO:0006633">
    <property type="term" value="P:fatty acid biosynthetic process"/>
    <property type="evidence" value="ECO:0007669"/>
    <property type="project" value="UniProtKB-UniRule"/>
</dbReference>
<dbReference type="GO" id="GO:0009245">
    <property type="term" value="P:lipid A biosynthetic process"/>
    <property type="evidence" value="ECO:0007669"/>
    <property type="project" value="UniProtKB-UniRule"/>
</dbReference>
<dbReference type="CDD" id="cd01288">
    <property type="entry name" value="FabZ"/>
    <property type="match status" value="1"/>
</dbReference>
<dbReference type="FunFam" id="3.10.129.10:FF:000001">
    <property type="entry name" value="3-hydroxyacyl-[acyl-carrier-protein] dehydratase FabZ"/>
    <property type="match status" value="1"/>
</dbReference>
<dbReference type="Gene3D" id="3.10.129.10">
    <property type="entry name" value="Hotdog Thioesterase"/>
    <property type="match status" value="1"/>
</dbReference>
<dbReference type="HAMAP" id="MF_00406">
    <property type="entry name" value="FabZ"/>
    <property type="match status" value="1"/>
</dbReference>
<dbReference type="InterPro" id="IPR013114">
    <property type="entry name" value="FabA_FabZ"/>
</dbReference>
<dbReference type="InterPro" id="IPR010084">
    <property type="entry name" value="FabZ"/>
</dbReference>
<dbReference type="InterPro" id="IPR029069">
    <property type="entry name" value="HotDog_dom_sf"/>
</dbReference>
<dbReference type="NCBIfam" id="TIGR01750">
    <property type="entry name" value="fabZ"/>
    <property type="match status" value="1"/>
</dbReference>
<dbReference type="NCBIfam" id="NF000582">
    <property type="entry name" value="PRK00006.1"/>
    <property type="match status" value="1"/>
</dbReference>
<dbReference type="PANTHER" id="PTHR30272">
    <property type="entry name" value="3-HYDROXYACYL-[ACYL-CARRIER-PROTEIN] DEHYDRATASE"/>
    <property type="match status" value="1"/>
</dbReference>
<dbReference type="PANTHER" id="PTHR30272:SF1">
    <property type="entry name" value="3-HYDROXYACYL-[ACYL-CARRIER-PROTEIN] DEHYDRATASE"/>
    <property type="match status" value="1"/>
</dbReference>
<dbReference type="Pfam" id="PF07977">
    <property type="entry name" value="FabA"/>
    <property type="match status" value="1"/>
</dbReference>
<dbReference type="SUPFAM" id="SSF54637">
    <property type="entry name" value="Thioesterase/thiol ester dehydrase-isomerase"/>
    <property type="match status" value="1"/>
</dbReference>
<protein>
    <recommendedName>
        <fullName evidence="1">3-hydroxyacyl-[acyl-carrier-protein] dehydratase FabZ</fullName>
        <ecNumber evidence="1">4.2.1.59</ecNumber>
    </recommendedName>
    <alternativeName>
        <fullName evidence="1">(3R)-hydroxymyristoyl-[acyl-carrier-protein] dehydratase</fullName>
        <shortName evidence="1">(3R)-hydroxymyristoyl-ACP dehydrase</shortName>
    </alternativeName>
    <alternativeName>
        <fullName evidence="1">Beta-hydroxyacyl-ACP dehydratase</fullName>
    </alternativeName>
</protein>
<gene>
    <name evidence="1" type="primary">fabZ</name>
    <name type="ordered locus">RPR_00040</name>
</gene>